<comment type="function">
    <text evidence="1">This protein binds to 23S rRNA.</text>
</comment>
<comment type="subunit">
    <text evidence="1">Part of the 50S ribosomal subunit.</text>
</comment>
<comment type="subcellular location">
    <subcellularLocation>
        <location>Plastid</location>
        <location>Chloroplast</location>
    </subcellularLocation>
</comment>
<comment type="similarity">
    <text evidence="1">Belongs to the bacterial ribosomal protein bL21 family.</text>
</comment>
<comment type="sequence caution" evidence="2">
    <conflict type="erroneous initiation">
        <sequence resource="EMBL-CDS" id="BAB84271"/>
    </conflict>
</comment>
<comment type="sequence caution" evidence="2">
    <conflict type="erroneous initiation">
        <sequence resource="EMBL-CDS" id="BAB84285"/>
    </conflict>
</comment>
<proteinExistence type="inferred from homology"/>
<reference key="1">
    <citation type="journal article" date="2004" name="Mol. Biol. Evol.">
        <title>Chloroplast phylogeny indicates that bryophytes are monophyletic.</title>
        <authorList>
            <person name="Nishiyama T."/>
            <person name="Wolf P.G."/>
            <person name="Kugita M."/>
            <person name="Sinclair R.B."/>
            <person name="Sugita M."/>
            <person name="Sugiura C."/>
            <person name="Wakasugi T."/>
            <person name="Yamada K."/>
            <person name="Yoshinaga K."/>
            <person name="Yamaguchi K."/>
            <person name="Ueda K."/>
            <person name="Hasebe M."/>
        </authorList>
    </citation>
    <scope>NUCLEOTIDE SEQUENCE [LARGE SCALE GENOMIC DNA]</scope>
    <source>
        <strain>Kingyoku</strain>
    </source>
</reference>
<accession>Q8W8W0</accession>
<evidence type="ECO:0000255" key="1">
    <source>
        <dbReference type="HAMAP-Rule" id="MF_01363"/>
    </source>
</evidence>
<evidence type="ECO:0000305" key="2"/>
<sequence>MGTYAIIETGGEQLRVEPGRFYDARCFASLNPRILSANAKILIHRVLMIRRESTTNLGHPWLRNAIVRGRILHSCYGEKITIYKMHSKKKVRRKLGYRQKLVRFVVDSISSNGEEFFD</sequence>
<feature type="chain" id="PRO_0000269449" description="Large ribosomal subunit protein bL21c">
    <location>
        <begin position="1"/>
        <end position="118"/>
    </location>
</feature>
<protein>
    <recommendedName>
        <fullName evidence="1">Large ribosomal subunit protein bL21c</fullName>
    </recommendedName>
    <alternativeName>
        <fullName evidence="2">50S ribosomal protein L21, chloroplastic</fullName>
    </alternativeName>
</protein>
<gene>
    <name evidence="1" type="primary">rpl21</name>
</gene>
<dbReference type="EMBL" id="AP004638">
    <property type="protein sequence ID" value="BAB84285.1"/>
    <property type="status" value="ALT_INIT"/>
    <property type="molecule type" value="Genomic_DNA"/>
</dbReference>
<dbReference type="EMBL" id="AP004638">
    <property type="protein sequence ID" value="BAB84271.1"/>
    <property type="status" value="ALT_INIT"/>
    <property type="molecule type" value="Genomic_DNA"/>
</dbReference>
<dbReference type="RefSeq" id="NP_569682.2">
    <property type="nucleotide sequence ID" value="NC_003386.1"/>
</dbReference>
<dbReference type="RefSeq" id="NP_569696.2">
    <property type="nucleotide sequence ID" value="NC_003386.1"/>
</dbReference>
<dbReference type="SMR" id="Q8W8W0"/>
<dbReference type="GeneID" id="2545158"/>
<dbReference type="GeneID" id="2545159"/>
<dbReference type="GO" id="GO:0009507">
    <property type="term" value="C:chloroplast"/>
    <property type="evidence" value="ECO:0007669"/>
    <property type="project" value="UniProtKB-SubCell"/>
</dbReference>
<dbReference type="GO" id="GO:1990904">
    <property type="term" value="C:ribonucleoprotein complex"/>
    <property type="evidence" value="ECO:0007669"/>
    <property type="project" value="UniProtKB-KW"/>
</dbReference>
<dbReference type="GO" id="GO:0005840">
    <property type="term" value="C:ribosome"/>
    <property type="evidence" value="ECO:0007669"/>
    <property type="project" value="UniProtKB-KW"/>
</dbReference>
<dbReference type="GO" id="GO:0019843">
    <property type="term" value="F:rRNA binding"/>
    <property type="evidence" value="ECO:0007669"/>
    <property type="project" value="UniProtKB-UniRule"/>
</dbReference>
<dbReference type="GO" id="GO:0003735">
    <property type="term" value="F:structural constituent of ribosome"/>
    <property type="evidence" value="ECO:0007669"/>
    <property type="project" value="InterPro"/>
</dbReference>
<dbReference type="GO" id="GO:0006412">
    <property type="term" value="P:translation"/>
    <property type="evidence" value="ECO:0007669"/>
    <property type="project" value="UniProtKB-UniRule"/>
</dbReference>
<dbReference type="HAMAP" id="MF_01363">
    <property type="entry name" value="Ribosomal_bL21"/>
    <property type="match status" value="1"/>
</dbReference>
<dbReference type="InterPro" id="IPR028909">
    <property type="entry name" value="bL21-like"/>
</dbReference>
<dbReference type="InterPro" id="IPR036164">
    <property type="entry name" value="bL21-like_sf"/>
</dbReference>
<dbReference type="InterPro" id="IPR001787">
    <property type="entry name" value="Ribosomal_bL21"/>
</dbReference>
<dbReference type="NCBIfam" id="TIGR00061">
    <property type="entry name" value="L21"/>
    <property type="match status" value="1"/>
</dbReference>
<dbReference type="PANTHER" id="PTHR21349">
    <property type="entry name" value="50S RIBOSOMAL PROTEIN L21"/>
    <property type="match status" value="1"/>
</dbReference>
<dbReference type="PANTHER" id="PTHR21349:SF0">
    <property type="entry name" value="LARGE RIBOSOMAL SUBUNIT PROTEIN BL21M"/>
    <property type="match status" value="1"/>
</dbReference>
<dbReference type="Pfam" id="PF00829">
    <property type="entry name" value="Ribosomal_L21p"/>
    <property type="match status" value="1"/>
</dbReference>
<dbReference type="SUPFAM" id="SSF141091">
    <property type="entry name" value="L21p-like"/>
    <property type="match status" value="1"/>
</dbReference>
<name>RK21_PSINU</name>
<organism>
    <name type="scientific">Psilotum nudum</name>
    <name type="common">Whisk fern</name>
    <name type="synonym">Lycopodium nudum</name>
    <dbReference type="NCBI Taxonomy" id="3240"/>
    <lineage>
        <taxon>Eukaryota</taxon>
        <taxon>Viridiplantae</taxon>
        <taxon>Streptophyta</taxon>
        <taxon>Embryophyta</taxon>
        <taxon>Tracheophyta</taxon>
        <taxon>Polypodiopsida</taxon>
        <taxon>Ophioglossidae</taxon>
        <taxon>Psilotales</taxon>
        <taxon>Psilotaceae</taxon>
        <taxon>Psilotum</taxon>
    </lineage>
</organism>
<geneLocation type="chloroplast"/>
<keyword id="KW-0150">Chloroplast</keyword>
<keyword id="KW-0934">Plastid</keyword>
<keyword id="KW-0687">Ribonucleoprotein</keyword>
<keyword id="KW-0689">Ribosomal protein</keyword>
<keyword id="KW-0694">RNA-binding</keyword>
<keyword id="KW-0699">rRNA-binding</keyword>